<dbReference type="EC" id="2.7.7.6" evidence="2"/>
<dbReference type="EMBL" id="AE000666">
    <property type="protein sequence ID" value="AAB85540.1"/>
    <property type="molecule type" value="Genomic_DNA"/>
</dbReference>
<dbReference type="PIR" id="D69006">
    <property type="entry name" value="D69006"/>
</dbReference>
<dbReference type="SMR" id="O27123"/>
<dbReference type="FunCoup" id="O27123">
    <property type="interactions" value="1"/>
</dbReference>
<dbReference type="STRING" id="187420.MTH_1049"/>
<dbReference type="PaxDb" id="187420-MTH_1049"/>
<dbReference type="EnsemblBacteria" id="AAB85540">
    <property type="protein sequence ID" value="AAB85540"/>
    <property type="gene ID" value="MTH_1049"/>
</dbReference>
<dbReference type="KEGG" id="mth:MTH_1049"/>
<dbReference type="PATRIC" id="fig|187420.15.peg.1028"/>
<dbReference type="HOGENOM" id="CLU_000524_5_3_2"/>
<dbReference type="InParanoid" id="O27123"/>
<dbReference type="Proteomes" id="UP000005223">
    <property type="component" value="Chromosome"/>
</dbReference>
<dbReference type="GO" id="GO:0005737">
    <property type="term" value="C:cytoplasm"/>
    <property type="evidence" value="ECO:0007669"/>
    <property type="project" value="UniProtKB-SubCell"/>
</dbReference>
<dbReference type="GO" id="GO:0000428">
    <property type="term" value="C:DNA-directed RNA polymerase complex"/>
    <property type="evidence" value="ECO:0007669"/>
    <property type="project" value="UniProtKB-KW"/>
</dbReference>
<dbReference type="GO" id="GO:0003677">
    <property type="term" value="F:DNA binding"/>
    <property type="evidence" value="ECO:0007669"/>
    <property type="project" value="UniProtKB-KW"/>
</dbReference>
<dbReference type="GO" id="GO:0003899">
    <property type="term" value="F:DNA-directed RNA polymerase activity"/>
    <property type="evidence" value="ECO:0007669"/>
    <property type="project" value="UniProtKB-EC"/>
</dbReference>
<dbReference type="GO" id="GO:0032549">
    <property type="term" value="F:ribonucleoside binding"/>
    <property type="evidence" value="ECO:0007669"/>
    <property type="project" value="InterPro"/>
</dbReference>
<dbReference type="GO" id="GO:0006351">
    <property type="term" value="P:DNA-templated transcription"/>
    <property type="evidence" value="ECO:0007669"/>
    <property type="project" value="InterPro"/>
</dbReference>
<dbReference type="Gene3D" id="3.90.1100.10">
    <property type="match status" value="2"/>
</dbReference>
<dbReference type="Gene3D" id="3.90.1110.10">
    <property type="entry name" value="RNA polymerase Rpb2, domain 2"/>
    <property type="match status" value="1"/>
</dbReference>
<dbReference type="InterPro" id="IPR015712">
    <property type="entry name" value="DNA-dir_RNA_pol_su2"/>
</dbReference>
<dbReference type="InterPro" id="IPR007644">
    <property type="entry name" value="RNA_pol_bsu_protrusion"/>
</dbReference>
<dbReference type="InterPro" id="IPR007642">
    <property type="entry name" value="RNA_pol_Rpb2_2"/>
</dbReference>
<dbReference type="InterPro" id="IPR037034">
    <property type="entry name" value="RNA_pol_Rpb2_2_sf"/>
</dbReference>
<dbReference type="InterPro" id="IPR007645">
    <property type="entry name" value="RNA_pol_Rpb2_3"/>
</dbReference>
<dbReference type="NCBIfam" id="NF007175">
    <property type="entry name" value="PRK09606.1"/>
    <property type="match status" value="1"/>
</dbReference>
<dbReference type="PANTHER" id="PTHR20856">
    <property type="entry name" value="DNA-DIRECTED RNA POLYMERASE I SUBUNIT 2"/>
    <property type="match status" value="1"/>
</dbReference>
<dbReference type="Pfam" id="PF04563">
    <property type="entry name" value="RNA_pol_Rpb2_1"/>
    <property type="match status" value="1"/>
</dbReference>
<dbReference type="Pfam" id="PF04561">
    <property type="entry name" value="RNA_pol_Rpb2_2"/>
    <property type="match status" value="1"/>
</dbReference>
<dbReference type="Pfam" id="PF04565">
    <property type="entry name" value="RNA_pol_Rpb2_3"/>
    <property type="match status" value="1"/>
</dbReference>
<dbReference type="SUPFAM" id="SSF64484">
    <property type="entry name" value="beta and beta-prime subunits of DNA dependent RNA-polymerase"/>
    <property type="match status" value="1"/>
</dbReference>
<comment type="function">
    <text evidence="1">DNA-dependent RNA polymerase (RNAP) catalyzes the transcription of DNA into RNA using the four ribonucleoside triphosphates as substrates. The Rpo2 subunit (Rpo2N and Rpo2C in this organism) is implicated in DNA promoter recognition and in nucleotide binding.</text>
</comment>
<comment type="catalytic activity">
    <reaction evidence="2">
        <text>RNA(n) + a ribonucleoside 5'-triphosphate = RNA(n+1) + diphosphate</text>
        <dbReference type="Rhea" id="RHEA:21248"/>
        <dbReference type="Rhea" id="RHEA-COMP:14527"/>
        <dbReference type="Rhea" id="RHEA-COMP:17342"/>
        <dbReference type="ChEBI" id="CHEBI:33019"/>
        <dbReference type="ChEBI" id="CHEBI:61557"/>
        <dbReference type="ChEBI" id="CHEBI:140395"/>
        <dbReference type="EC" id="2.7.7.6"/>
    </reaction>
</comment>
<comment type="subunit">
    <text evidence="1">Part of the RNA polymerase complex.</text>
</comment>
<comment type="subcellular location">
    <subcellularLocation>
        <location evidence="1">Cytoplasm</location>
    </subcellularLocation>
</comment>
<comment type="similarity">
    <text evidence="4">Belongs to the RNA polymerase beta chain family.</text>
</comment>
<sequence>MFWRKSMKKSAWGLVDAFFDKYDLVDHHIHSYNDFVSNRIQEIIDTSEPIELEQGKYRVETGKVSIEKPFIKEADGSKSKIYPTEARLRNLTYSAHMSLEMRLLKEGGPETEFEKVYIGELPVMLKSEICHLHGLSRKELMEKGEDPADPGGYFIVNGSERSIVTMEEIAPNKIILERIGEEDENRARAIVTSIRSGFRARISLEYRKPRKTGVFLRISFPYVPGEIPLVILLRALGLATDQEIITSISDDFNYQMIAADDIQVSLDRLNLNKKEMKELDEEDRREYLIRSAIKYIGNRVAKGMTEDYRIKRAEDVIDRYLLPHIGTEPEKRLEKATYLAEMTEMLLQVISGERRPHDKDHYTNKRLRVSGDLMEDLLRVAFTSLSRDMSYQLERSLARGKEPSVKQAVRSDVLTENLKHAIATGNWVGGRAGVSQLLDRTSYMGTLSHMRRVVSPLSRSQPHFEARDLHPTQFGKICPNETPEGPNCGLVKNLALLAKISEGSDASEVEEVIKMGVVN</sequence>
<name>RPO2N_METTH</name>
<keyword id="KW-0963">Cytoplasm</keyword>
<keyword id="KW-0238">DNA-binding</keyword>
<keyword id="KW-0240">DNA-directed RNA polymerase</keyword>
<keyword id="KW-0548">Nucleotidyltransferase</keyword>
<keyword id="KW-1185">Reference proteome</keyword>
<keyword id="KW-0804">Transcription</keyword>
<keyword id="KW-0808">Transferase</keyword>
<evidence type="ECO:0000250" key="1">
    <source>
        <dbReference type="UniProtKB" id="B8YB55"/>
    </source>
</evidence>
<evidence type="ECO:0000250" key="2">
    <source>
        <dbReference type="UniProtKB" id="P11513"/>
    </source>
</evidence>
<evidence type="ECO:0000303" key="3">
    <source>
    </source>
</evidence>
<evidence type="ECO:0000305" key="4"/>
<reference key="1">
    <citation type="journal article" date="1997" name="J. Bacteriol.">
        <title>Complete genome sequence of Methanobacterium thermoautotrophicum deltaH: functional analysis and comparative genomics.</title>
        <authorList>
            <person name="Smith D.R."/>
            <person name="Doucette-Stamm L.A."/>
            <person name="Deloughery C."/>
            <person name="Lee H.-M."/>
            <person name="Dubois J."/>
            <person name="Aldredge T."/>
            <person name="Bashirzadeh R."/>
            <person name="Blakely D."/>
            <person name="Cook R."/>
            <person name="Gilbert K."/>
            <person name="Harrison D."/>
            <person name="Hoang L."/>
            <person name="Keagle P."/>
            <person name="Lumm W."/>
            <person name="Pothier B."/>
            <person name="Qiu D."/>
            <person name="Spadafora R."/>
            <person name="Vicare R."/>
            <person name="Wang Y."/>
            <person name="Wierzbowski J."/>
            <person name="Gibson R."/>
            <person name="Jiwani N."/>
            <person name="Caruso A."/>
            <person name="Bush D."/>
            <person name="Safer H."/>
            <person name="Patwell D."/>
            <person name="Prabhakar S."/>
            <person name="McDougall S."/>
            <person name="Shimer G."/>
            <person name="Goyal A."/>
            <person name="Pietrovski S."/>
            <person name="Church G.M."/>
            <person name="Daniels C.J."/>
            <person name="Mao J.-I."/>
            <person name="Rice P."/>
            <person name="Noelling J."/>
            <person name="Reeve J.N."/>
        </authorList>
    </citation>
    <scope>NUCLEOTIDE SEQUENCE [LARGE SCALE GENOMIC DNA]</scope>
    <source>
        <strain>ATCC 29096 / DSM 1053 / JCM 10044 / NBRC 100330 / Delta H</strain>
    </source>
</reference>
<gene>
    <name evidence="4" type="primary">rpo2N</name>
    <name type="synonym">rpoB2</name>
    <name type="ordered locus">MTH_1049</name>
</gene>
<feature type="chain" id="PRO_0000074032" description="DNA-directed RNA polymerase subunit Rpo2N">
    <location>
        <begin position="1"/>
        <end position="519"/>
    </location>
</feature>
<organism>
    <name type="scientific">Methanothermobacter thermautotrophicus (strain ATCC 29096 / DSM 1053 / JCM 10044 / NBRC 100330 / Delta H)</name>
    <name type="common">Methanobacterium thermoautotrophicum</name>
    <dbReference type="NCBI Taxonomy" id="187420"/>
    <lineage>
        <taxon>Archaea</taxon>
        <taxon>Methanobacteriati</taxon>
        <taxon>Methanobacteriota</taxon>
        <taxon>Methanomada group</taxon>
        <taxon>Methanobacteria</taxon>
        <taxon>Methanobacteriales</taxon>
        <taxon>Methanobacteriaceae</taxon>
        <taxon>Methanothermobacter</taxon>
    </lineage>
</organism>
<protein>
    <recommendedName>
        <fullName evidence="4">DNA-directed RNA polymerase subunit Rpo2N</fullName>
        <ecNumber evidence="2">2.7.7.6</ecNumber>
    </recommendedName>
    <alternativeName>
        <fullName evidence="3">DNA-directed RNA polymerase subunit B''</fullName>
    </alternativeName>
</protein>
<accession>O27123</accession>
<proteinExistence type="inferred from homology"/>